<evidence type="ECO:0000250" key="1"/>
<evidence type="ECO:0000255" key="2"/>
<evidence type="ECO:0000255" key="3">
    <source>
        <dbReference type="PROSITE-ProRule" id="PRU00352"/>
    </source>
</evidence>
<evidence type="ECO:0000256" key="4">
    <source>
        <dbReference type="SAM" id="MobiDB-lite"/>
    </source>
</evidence>
<evidence type="ECO:0000269" key="5">
    <source>
    </source>
</evidence>
<evidence type="ECO:0000269" key="6">
    <source>
    </source>
</evidence>
<evidence type="ECO:0000303" key="7">
    <source>
    </source>
</evidence>
<evidence type="ECO:0000305" key="8"/>
<reference key="1">
    <citation type="journal article" date="1996" name="Oncogene">
        <title>Distinct 3p21.3 deletions in lung cancer and identification of a new human semaphorin.</title>
        <authorList>
            <person name="Roche J."/>
            <person name="Boldog F."/>
            <person name="Robinson M."/>
            <person name="Robinson L."/>
            <person name="Varella-Garcia M."/>
            <person name="Swanton M."/>
            <person name="Waggoner B."/>
            <person name="Fishel R."/>
            <person name="Franklin W."/>
            <person name="Gemmill R."/>
            <person name="Drabkin H."/>
        </authorList>
    </citation>
    <scope>NUCLEOTIDE SEQUENCE [MRNA] (ISOFORM 1)</scope>
    <source>
        <tissue>Fetal brain</tissue>
    </source>
</reference>
<reference key="2">
    <citation type="journal article" date="1996" name="Genomics">
        <title>Isolation of the human semaphorin III/F gene (SEMA3F) at chromosome 3p21, a region deleted in lung cancer.</title>
        <authorList>
            <person name="Xiang R.-H."/>
            <person name="Hensel C.H."/>
            <person name="Garcia D.K."/>
            <person name="Carlson H.C."/>
            <person name="Kok K."/>
            <person name="Daly M.C."/>
            <person name="Kerbacher K."/>
            <person name="van den Berg A."/>
            <person name="Veldhuis P."/>
            <person name="Buys C.H.C.M."/>
            <person name="Naylor S.L."/>
        </authorList>
    </citation>
    <scope>NUCLEOTIDE SEQUENCE [MRNA] (ISOFORM 2)</scope>
    <scope>VARIANT MET-503</scope>
    <source>
        <tissue>Fetal brain</tissue>
    </source>
</reference>
<reference key="3">
    <citation type="submission" date="1996-11" db="EMBL/GenBank/DDBJ databases">
        <title>The sequence of H. sapiens cosmid clone LUCA19.</title>
        <authorList>
            <person name="Nelson J."/>
            <person name="Biewald T."/>
        </authorList>
    </citation>
    <scope>NUCLEOTIDE SEQUENCE [GENOMIC DNA]</scope>
</reference>
<reference key="4">
    <citation type="journal article" date="2006" name="Nature">
        <title>The DNA sequence, annotation and analysis of human chromosome 3.</title>
        <authorList>
            <person name="Muzny D.M."/>
            <person name="Scherer S.E."/>
            <person name="Kaul R."/>
            <person name="Wang J."/>
            <person name="Yu J."/>
            <person name="Sudbrak R."/>
            <person name="Buhay C.J."/>
            <person name="Chen R."/>
            <person name="Cree A."/>
            <person name="Ding Y."/>
            <person name="Dugan-Rocha S."/>
            <person name="Gill R."/>
            <person name="Gunaratne P."/>
            <person name="Harris R.A."/>
            <person name="Hawes A.C."/>
            <person name="Hernandez J."/>
            <person name="Hodgson A.V."/>
            <person name="Hume J."/>
            <person name="Jackson A."/>
            <person name="Khan Z.M."/>
            <person name="Kovar-Smith C."/>
            <person name="Lewis L.R."/>
            <person name="Lozado R.J."/>
            <person name="Metzker M.L."/>
            <person name="Milosavljevic A."/>
            <person name="Miner G.R."/>
            <person name="Morgan M.B."/>
            <person name="Nazareth L.V."/>
            <person name="Scott G."/>
            <person name="Sodergren E."/>
            <person name="Song X.-Z."/>
            <person name="Steffen D."/>
            <person name="Wei S."/>
            <person name="Wheeler D.A."/>
            <person name="Wright M.W."/>
            <person name="Worley K.C."/>
            <person name="Yuan Y."/>
            <person name="Zhang Z."/>
            <person name="Adams C.Q."/>
            <person name="Ansari-Lari M.A."/>
            <person name="Ayele M."/>
            <person name="Brown M.J."/>
            <person name="Chen G."/>
            <person name="Chen Z."/>
            <person name="Clendenning J."/>
            <person name="Clerc-Blankenburg K.P."/>
            <person name="Chen R."/>
            <person name="Chen Z."/>
            <person name="Davis C."/>
            <person name="Delgado O."/>
            <person name="Dinh H.H."/>
            <person name="Dong W."/>
            <person name="Draper H."/>
            <person name="Ernst S."/>
            <person name="Fu G."/>
            <person name="Gonzalez-Garay M.L."/>
            <person name="Garcia D.K."/>
            <person name="Gillett W."/>
            <person name="Gu J."/>
            <person name="Hao B."/>
            <person name="Haugen E."/>
            <person name="Havlak P."/>
            <person name="He X."/>
            <person name="Hennig S."/>
            <person name="Hu S."/>
            <person name="Huang W."/>
            <person name="Jackson L.R."/>
            <person name="Jacob L.S."/>
            <person name="Kelly S.H."/>
            <person name="Kube M."/>
            <person name="Levy R."/>
            <person name="Li Z."/>
            <person name="Liu B."/>
            <person name="Liu J."/>
            <person name="Liu W."/>
            <person name="Lu J."/>
            <person name="Maheshwari M."/>
            <person name="Nguyen B.-V."/>
            <person name="Okwuonu G.O."/>
            <person name="Palmeiri A."/>
            <person name="Pasternak S."/>
            <person name="Perez L.M."/>
            <person name="Phelps K.A."/>
            <person name="Plopper F.J."/>
            <person name="Qiang B."/>
            <person name="Raymond C."/>
            <person name="Rodriguez R."/>
            <person name="Saenphimmachak C."/>
            <person name="Santibanez J."/>
            <person name="Shen H."/>
            <person name="Shen Y."/>
            <person name="Subramanian S."/>
            <person name="Tabor P.E."/>
            <person name="Verduzco D."/>
            <person name="Waldron L."/>
            <person name="Wang J."/>
            <person name="Wang J."/>
            <person name="Wang Q."/>
            <person name="Williams G.A."/>
            <person name="Wong G.K.-S."/>
            <person name="Yao Z."/>
            <person name="Zhang J."/>
            <person name="Zhang X."/>
            <person name="Zhao G."/>
            <person name="Zhou J."/>
            <person name="Zhou Y."/>
            <person name="Nelson D."/>
            <person name="Lehrach H."/>
            <person name="Reinhardt R."/>
            <person name="Naylor S.L."/>
            <person name="Yang H."/>
            <person name="Olson M."/>
            <person name="Weinstock G."/>
            <person name="Gibbs R.A."/>
        </authorList>
    </citation>
    <scope>NUCLEOTIDE SEQUENCE [LARGE SCALE GENOMIC DNA]</scope>
</reference>
<reference key="5">
    <citation type="journal article" date="2004" name="Genome Res.">
        <title>The status, quality, and expansion of the NIH full-length cDNA project: the Mammalian Gene Collection (MGC).</title>
        <authorList>
            <consortium name="The MGC Project Team"/>
        </authorList>
    </citation>
    <scope>NUCLEOTIDE SEQUENCE [LARGE SCALE MRNA] (ISOFORM 1)</scope>
    <scope>VARIANT MET-503</scope>
    <source>
        <tissue>Brain</tissue>
    </source>
</reference>
<reference key="6">
    <citation type="journal article" date="1996" name="Proc. Natl. Acad. Sci. U.S.A.">
        <title>Human semaphorins A(V) and IV reside in the 3p21.3 small cell lung cancer deletion region and demonstrate distinct expression patterns.</title>
        <authorList>
            <person name="Sekido Y."/>
            <person name="Bader S."/>
            <person name="Latif F."/>
            <person name="Chen J.-Y."/>
            <person name="Duh F.-M."/>
            <person name="Wei M.-H."/>
            <person name="Albanesi J.P."/>
            <person name="Lee C.-C."/>
            <person name="Lerman M.I."/>
            <person name="Minna J.D."/>
        </authorList>
    </citation>
    <scope>NUCLEOTIDE SEQUENCE [MRNA] OF 394-436 (ISOFORM 1/2)</scope>
    <source>
        <tissue>Placenta</tissue>
    </source>
</reference>
<gene>
    <name type="primary">SEMA3F</name>
</gene>
<organism>
    <name type="scientific">Homo sapiens</name>
    <name type="common">Human</name>
    <dbReference type="NCBI Taxonomy" id="9606"/>
    <lineage>
        <taxon>Eukaryota</taxon>
        <taxon>Metazoa</taxon>
        <taxon>Chordata</taxon>
        <taxon>Craniata</taxon>
        <taxon>Vertebrata</taxon>
        <taxon>Euteleostomi</taxon>
        <taxon>Mammalia</taxon>
        <taxon>Eutheria</taxon>
        <taxon>Euarchontoglires</taxon>
        <taxon>Primates</taxon>
        <taxon>Haplorrhini</taxon>
        <taxon>Catarrhini</taxon>
        <taxon>Hominidae</taxon>
        <taxon>Homo</taxon>
    </lineage>
</organism>
<name>SEM3F_HUMAN</name>
<protein>
    <recommendedName>
        <fullName>Semaphorin-3F</fullName>
    </recommendedName>
    <alternativeName>
        <fullName>Sema III/F</fullName>
    </alternativeName>
    <alternativeName>
        <fullName>Semaphorin IV</fullName>
        <shortName>Sema IV</shortName>
    </alternativeName>
</protein>
<dbReference type="EMBL" id="U33920">
    <property type="protein sequence ID" value="AAC50568.1"/>
    <property type="molecule type" value="mRNA"/>
</dbReference>
<dbReference type="EMBL" id="U38276">
    <property type="protein sequence ID" value="AAB18276.1"/>
    <property type="molecule type" value="mRNA"/>
</dbReference>
<dbReference type="EMBL" id="AC000063">
    <property type="protein sequence ID" value="AAB46344.1"/>
    <property type="molecule type" value="Genomic_DNA"/>
</dbReference>
<dbReference type="EMBL" id="AC104450">
    <property type="status" value="NOT_ANNOTATED_CDS"/>
    <property type="molecule type" value="Genomic_DNA"/>
</dbReference>
<dbReference type="EMBL" id="BC042914">
    <property type="protein sequence ID" value="AAH42914.1"/>
    <property type="molecule type" value="mRNA"/>
</dbReference>
<dbReference type="EMBL" id="U32171">
    <property type="protein sequence ID" value="AAB06011.1"/>
    <property type="molecule type" value="mRNA"/>
</dbReference>
<dbReference type="EMBL" id="U32172">
    <property type="protein sequence ID" value="AAB06012.1"/>
    <property type="molecule type" value="mRNA"/>
</dbReference>
<dbReference type="CCDS" id="CCDS2811.1">
    <molecule id="Q13275-1"/>
</dbReference>
<dbReference type="CCDS" id="CCDS82779.1">
    <molecule id="Q13275-2"/>
</dbReference>
<dbReference type="PIR" id="G02173">
    <property type="entry name" value="G02173"/>
</dbReference>
<dbReference type="RefSeq" id="NP_001305729.1">
    <molecule id="Q13275-2"/>
    <property type="nucleotide sequence ID" value="NM_001318800.2"/>
</dbReference>
<dbReference type="RefSeq" id="NP_004177.3">
    <molecule id="Q13275-1"/>
    <property type="nucleotide sequence ID" value="NM_004186.4"/>
</dbReference>
<dbReference type="RefSeq" id="XP_005265438.1">
    <molecule id="Q13275-1"/>
    <property type="nucleotide sequence ID" value="XM_005265381.5"/>
</dbReference>
<dbReference type="RefSeq" id="XP_005265439.1">
    <molecule id="Q13275-2"/>
    <property type="nucleotide sequence ID" value="XM_005265382.5"/>
</dbReference>
<dbReference type="RefSeq" id="XP_011532300.1">
    <molecule id="Q13275-1"/>
    <property type="nucleotide sequence ID" value="XM_011533998.3"/>
</dbReference>
<dbReference type="RefSeq" id="XP_047304655.1">
    <molecule id="Q13275-1"/>
    <property type="nucleotide sequence ID" value="XM_047448699.1"/>
</dbReference>
<dbReference type="RefSeq" id="XP_047304656.1">
    <molecule id="Q13275-2"/>
    <property type="nucleotide sequence ID" value="XM_047448700.1"/>
</dbReference>
<dbReference type="SMR" id="Q13275"/>
<dbReference type="BioGRID" id="112305">
    <property type="interactions" value="14"/>
</dbReference>
<dbReference type="FunCoup" id="Q13275">
    <property type="interactions" value="255"/>
</dbReference>
<dbReference type="IntAct" id="Q13275">
    <property type="interactions" value="4"/>
</dbReference>
<dbReference type="STRING" id="9606.ENSP00000002829"/>
<dbReference type="GlyConnect" id="1731">
    <property type="glycosylation" value="3 N-Linked glycans (2 sites)"/>
</dbReference>
<dbReference type="GlyCosmos" id="Q13275">
    <property type="glycosylation" value="3 sites, 5 glycans"/>
</dbReference>
<dbReference type="GlyGen" id="Q13275">
    <property type="glycosylation" value="4 sites, 7 N-linked glycans (2 sites), 1 O-linked glycan (1 site)"/>
</dbReference>
<dbReference type="iPTMnet" id="Q13275"/>
<dbReference type="PhosphoSitePlus" id="Q13275"/>
<dbReference type="BioMuta" id="SEMA3F"/>
<dbReference type="DMDM" id="8134696"/>
<dbReference type="jPOST" id="Q13275"/>
<dbReference type="MassIVE" id="Q13275"/>
<dbReference type="PaxDb" id="9606-ENSP00000002829"/>
<dbReference type="PeptideAtlas" id="Q13275"/>
<dbReference type="ProteomicsDB" id="11213"/>
<dbReference type="ProteomicsDB" id="59270">
    <molecule id="Q13275-1"/>
</dbReference>
<dbReference type="Pumba" id="Q13275"/>
<dbReference type="Antibodypedia" id="30785">
    <property type="antibodies" value="181 antibodies from 29 providers"/>
</dbReference>
<dbReference type="DNASU" id="6405"/>
<dbReference type="Ensembl" id="ENST00000002829.8">
    <molecule id="Q13275-1"/>
    <property type="protein sequence ID" value="ENSP00000002829.3"/>
    <property type="gene ID" value="ENSG00000001617.12"/>
</dbReference>
<dbReference type="Ensembl" id="ENST00000434342.5">
    <molecule id="Q13275-2"/>
    <property type="protein sequence ID" value="ENSP00000409859.1"/>
    <property type="gene ID" value="ENSG00000001617.12"/>
</dbReference>
<dbReference type="GeneID" id="6405"/>
<dbReference type="KEGG" id="hsa:6405"/>
<dbReference type="MANE-Select" id="ENST00000002829.8">
    <property type="protein sequence ID" value="ENSP00000002829.3"/>
    <property type="RefSeq nucleotide sequence ID" value="NM_004186.5"/>
    <property type="RefSeq protein sequence ID" value="NP_004177.3"/>
</dbReference>
<dbReference type="UCSC" id="uc003cyj.4">
    <molecule id="Q13275-1"/>
    <property type="organism name" value="human"/>
</dbReference>
<dbReference type="AGR" id="HGNC:10728"/>
<dbReference type="CTD" id="6405"/>
<dbReference type="DisGeNET" id="6405"/>
<dbReference type="GeneCards" id="SEMA3F"/>
<dbReference type="HGNC" id="HGNC:10728">
    <property type="gene designation" value="SEMA3F"/>
</dbReference>
<dbReference type="HPA" id="ENSG00000001617">
    <property type="expression patterns" value="Tissue enhanced (esophagus)"/>
</dbReference>
<dbReference type="MIM" id="601124">
    <property type="type" value="gene"/>
</dbReference>
<dbReference type="neXtProt" id="NX_Q13275"/>
<dbReference type="OpenTargets" id="ENSG00000001617"/>
<dbReference type="PharmGKB" id="PA35650"/>
<dbReference type="VEuPathDB" id="HostDB:ENSG00000001617"/>
<dbReference type="eggNOG" id="KOG3611">
    <property type="taxonomic scope" value="Eukaryota"/>
</dbReference>
<dbReference type="GeneTree" id="ENSGT00940000156703"/>
<dbReference type="InParanoid" id="Q13275"/>
<dbReference type="OMA" id="HQDYIFY"/>
<dbReference type="OrthoDB" id="9988752at2759"/>
<dbReference type="PAN-GO" id="Q13275">
    <property type="GO annotations" value="10 GO annotations based on evolutionary models"/>
</dbReference>
<dbReference type="PhylomeDB" id="Q13275"/>
<dbReference type="TreeFam" id="TF352628"/>
<dbReference type="PathwayCommons" id="Q13275"/>
<dbReference type="SignaLink" id="Q13275"/>
<dbReference type="SIGNOR" id="Q13275"/>
<dbReference type="BioGRID-ORCS" id="6405">
    <property type="hits" value="10 hits in 1148 CRISPR screens"/>
</dbReference>
<dbReference type="ChiTaRS" id="SEMA3F">
    <property type="organism name" value="human"/>
</dbReference>
<dbReference type="GeneWiki" id="SEMA3F"/>
<dbReference type="GenomeRNAi" id="6405"/>
<dbReference type="Pharos" id="Q13275">
    <property type="development level" value="Tbio"/>
</dbReference>
<dbReference type="PRO" id="PR:Q13275"/>
<dbReference type="Proteomes" id="UP000005640">
    <property type="component" value="Chromosome 3"/>
</dbReference>
<dbReference type="RNAct" id="Q13275">
    <property type="molecule type" value="protein"/>
</dbReference>
<dbReference type="Bgee" id="ENSG00000001617">
    <property type="expression patterns" value="Expressed in cervix squamous epithelium and 205 other cell types or tissues"/>
</dbReference>
<dbReference type="ExpressionAtlas" id="Q13275">
    <property type="expression patterns" value="baseline and differential"/>
</dbReference>
<dbReference type="GO" id="GO:0005615">
    <property type="term" value="C:extracellular space"/>
    <property type="evidence" value="ECO:0000304"/>
    <property type="project" value="ProtInc"/>
</dbReference>
<dbReference type="GO" id="GO:0098978">
    <property type="term" value="C:glutamatergic synapse"/>
    <property type="evidence" value="ECO:0007669"/>
    <property type="project" value="Ensembl"/>
</dbReference>
<dbReference type="GO" id="GO:0005886">
    <property type="term" value="C:plasma membrane"/>
    <property type="evidence" value="ECO:0000318"/>
    <property type="project" value="GO_Central"/>
</dbReference>
<dbReference type="GO" id="GO:0045499">
    <property type="term" value="F:chemorepellent activity"/>
    <property type="evidence" value="ECO:0000314"/>
    <property type="project" value="MGI"/>
</dbReference>
<dbReference type="GO" id="GO:0038191">
    <property type="term" value="F:neuropilin binding"/>
    <property type="evidence" value="ECO:0000318"/>
    <property type="project" value="GO_Central"/>
</dbReference>
<dbReference type="GO" id="GO:0030215">
    <property type="term" value="F:semaphorin receptor binding"/>
    <property type="evidence" value="ECO:0000318"/>
    <property type="project" value="GO_Central"/>
</dbReference>
<dbReference type="GO" id="GO:0048846">
    <property type="term" value="P:axon extension involved in axon guidance"/>
    <property type="evidence" value="ECO:0000250"/>
    <property type="project" value="BHF-UCL"/>
</dbReference>
<dbReference type="GO" id="GO:0007411">
    <property type="term" value="P:axon guidance"/>
    <property type="evidence" value="ECO:0000314"/>
    <property type="project" value="MGI"/>
</dbReference>
<dbReference type="GO" id="GO:0021785">
    <property type="term" value="P:branchiomotor neuron axon guidance"/>
    <property type="evidence" value="ECO:0000250"/>
    <property type="project" value="ParkinsonsUK-UCL"/>
</dbReference>
<dbReference type="GO" id="GO:0021612">
    <property type="term" value="P:facial nerve structural organization"/>
    <property type="evidence" value="ECO:0000250"/>
    <property type="project" value="ParkinsonsUK-UCL"/>
</dbReference>
<dbReference type="GO" id="GO:0050919">
    <property type="term" value="P:negative chemotaxis"/>
    <property type="evidence" value="ECO:0000318"/>
    <property type="project" value="GO_Central"/>
</dbReference>
<dbReference type="GO" id="GO:0048843">
    <property type="term" value="P:negative regulation of axon extension involved in axon guidance"/>
    <property type="evidence" value="ECO:0007669"/>
    <property type="project" value="Ensembl"/>
</dbReference>
<dbReference type="GO" id="GO:0021675">
    <property type="term" value="P:nerve development"/>
    <property type="evidence" value="ECO:0000250"/>
    <property type="project" value="BHF-UCL"/>
</dbReference>
<dbReference type="GO" id="GO:0001755">
    <property type="term" value="P:neural crest cell migration"/>
    <property type="evidence" value="ECO:0000318"/>
    <property type="project" value="GO_Central"/>
</dbReference>
<dbReference type="GO" id="GO:1901166">
    <property type="term" value="P:neural crest cell migration involved in autonomic nervous system development"/>
    <property type="evidence" value="ECO:0007669"/>
    <property type="project" value="Ensembl"/>
</dbReference>
<dbReference type="GO" id="GO:0030335">
    <property type="term" value="P:positive regulation of cell migration"/>
    <property type="evidence" value="ECO:0000318"/>
    <property type="project" value="GO_Central"/>
</dbReference>
<dbReference type="GO" id="GO:0099175">
    <property type="term" value="P:regulation of postsynapse organization"/>
    <property type="evidence" value="ECO:0007669"/>
    <property type="project" value="Ensembl"/>
</dbReference>
<dbReference type="GO" id="GO:0071526">
    <property type="term" value="P:semaphorin-plexin signaling pathway"/>
    <property type="evidence" value="ECO:0000250"/>
    <property type="project" value="BHF-UCL"/>
</dbReference>
<dbReference type="GO" id="GO:0061549">
    <property type="term" value="P:sympathetic ganglion development"/>
    <property type="evidence" value="ECO:0000250"/>
    <property type="project" value="BHF-UCL"/>
</dbReference>
<dbReference type="GO" id="GO:0097490">
    <property type="term" value="P:sympathetic neuron projection extension"/>
    <property type="evidence" value="ECO:0000250"/>
    <property type="project" value="BHF-UCL"/>
</dbReference>
<dbReference type="GO" id="GO:0097491">
    <property type="term" value="P:sympathetic neuron projection guidance"/>
    <property type="evidence" value="ECO:0000250"/>
    <property type="project" value="BHF-UCL"/>
</dbReference>
<dbReference type="GO" id="GO:0021637">
    <property type="term" value="P:trigeminal nerve structural organization"/>
    <property type="evidence" value="ECO:0000250"/>
    <property type="project" value="ParkinsonsUK-UCL"/>
</dbReference>
<dbReference type="GO" id="GO:0036486">
    <property type="term" value="P:ventral trunk neural crest cell migration"/>
    <property type="evidence" value="ECO:0007669"/>
    <property type="project" value="Ensembl"/>
</dbReference>
<dbReference type="CDD" id="cd05871">
    <property type="entry name" value="Ig_Sema3"/>
    <property type="match status" value="1"/>
</dbReference>
<dbReference type="CDD" id="cd11254">
    <property type="entry name" value="Sema_3F"/>
    <property type="match status" value="1"/>
</dbReference>
<dbReference type="FunFam" id="2.60.40.10:FF:000030">
    <property type="entry name" value="Semaphorin 3F like"/>
    <property type="match status" value="1"/>
</dbReference>
<dbReference type="FunFam" id="3.30.1680.10:FF:000001">
    <property type="entry name" value="Semaphorin 3F like"/>
    <property type="match status" value="1"/>
</dbReference>
<dbReference type="Gene3D" id="2.60.40.10">
    <property type="entry name" value="Immunoglobulins"/>
    <property type="match status" value="1"/>
</dbReference>
<dbReference type="Gene3D" id="3.30.1680.10">
    <property type="entry name" value="ligand-binding face of the semaphorins, domain 2"/>
    <property type="match status" value="1"/>
</dbReference>
<dbReference type="Gene3D" id="2.130.10.10">
    <property type="entry name" value="YVTN repeat-like/Quinoprotein amine dehydrogenase"/>
    <property type="match status" value="1"/>
</dbReference>
<dbReference type="InterPro" id="IPR007110">
    <property type="entry name" value="Ig-like_dom"/>
</dbReference>
<dbReference type="InterPro" id="IPR036179">
    <property type="entry name" value="Ig-like_dom_sf"/>
</dbReference>
<dbReference type="InterPro" id="IPR013783">
    <property type="entry name" value="Ig-like_fold"/>
</dbReference>
<dbReference type="InterPro" id="IPR003599">
    <property type="entry name" value="Ig_sub"/>
</dbReference>
<dbReference type="InterPro" id="IPR003598">
    <property type="entry name" value="Ig_sub2"/>
</dbReference>
<dbReference type="InterPro" id="IPR016201">
    <property type="entry name" value="PSI"/>
</dbReference>
<dbReference type="InterPro" id="IPR001627">
    <property type="entry name" value="Semap_dom"/>
</dbReference>
<dbReference type="InterPro" id="IPR036352">
    <property type="entry name" value="Semap_dom_sf"/>
</dbReference>
<dbReference type="InterPro" id="IPR027231">
    <property type="entry name" value="Semaphorin"/>
</dbReference>
<dbReference type="InterPro" id="IPR015943">
    <property type="entry name" value="WD40/YVTN_repeat-like_dom_sf"/>
</dbReference>
<dbReference type="PANTHER" id="PTHR11036">
    <property type="entry name" value="SEMAPHORIN"/>
    <property type="match status" value="1"/>
</dbReference>
<dbReference type="PANTHER" id="PTHR11036:SF27">
    <property type="entry name" value="SEMAPHORIN-3F"/>
    <property type="match status" value="1"/>
</dbReference>
<dbReference type="Pfam" id="PF01403">
    <property type="entry name" value="Sema"/>
    <property type="match status" value="1"/>
</dbReference>
<dbReference type="SMART" id="SM00409">
    <property type="entry name" value="IG"/>
    <property type="match status" value="1"/>
</dbReference>
<dbReference type="SMART" id="SM00408">
    <property type="entry name" value="IGc2"/>
    <property type="match status" value="1"/>
</dbReference>
<dbReference type="SMART" id="SM00423">
    <property type="entry name" value="PSI"/>
    <property type="match status" value="1"/>
</dbReference>
<dbReference type="SMART" id="SM00630">
    <property type="entry name" value="Sema"/>
    <property type="match status" value="1"/>
</dbReference>
<dbReference type="SUPFAM" id="SSF48726">
    <property type="entry name" value="Immunoglobulin"/>
    <property type="match status" value="1"/>
</dbReference>
<dbReference type="SUPFAM" id="SSF103575">
    <property type="entry name" value="Plexin repeat"/>
    <property type="match status" value="1"/>
</dbReference>
<dbReference type="SUPFAM" id="SSF101912">
    <property type="entry name" value="Sema domain"/>
    <property type="match status" value="1"/>
</dbReference>
<dbReference type="PROSITE" id="PS50835">
    <property type="entry name" value="IG_LIKE"/>
    <property type="match status" value="1"/>
</dbReference>
<dbReference type="PROSITE" id="PS51004">
    <property type="entry name" value="SEMA"/>
    <property type="match status" value="1"/>
</dbReference>
<accession>Q13275</accession>
<accession>C9JQ85</accession>
<accession>Q13274</accession>
<accession>Q13372</accession>
<accession>Q15704</accession>
<accession>Q6GTR4</accession>
<feature type="signal peptide" evidence="2">
    <location>
        <begin position="1"/>
        <end position="18"/>
    </location>
</feature>
<feature type="chain" id="PRO_0000032320" description="Semaphorin-3F">
    <location>
        <begin position="19"/>
        <end position="785"/>
    </location>
</feature>
<feature type="domain" description="Sema" evidence="3">
    <location>
        <begin position="31"/>
        <end position="545"/>
    </location>
</feature>
<feature type="domain" description="Ig-like C2-type">
    <location>
        <begin position="605"/>
        <end position="690"/>
    </location>
</feature>
<feature type="region of interest" description="Disordered" evidence="4">
    <location>
        <begin position="752"/>
        <end position="785"/>
    </location>
</feature>
<feature type="compositionally biased region" description="Basic residues" evidence="4">
    <location>
        <begin position="775"/>
        <end position="785"/>
    </location>
</feature>
<feature type="glycosylation site" description="N-linked (GlcNAc...) asparagine" evidence="2">
    <location>
        <position position="53"/>
    </location>
</feature>
<feature type="glycosylation site" description="N-linked (GlcNAc...) asparagine" evidence="2">
    <location>
        <position position="126"/>
    </location>
</feature>
<feature type="disulfide bond" evidence="1">
    <location>
        <begin position="104"/>
        <end position="115"/>
    </location>
</feature>
<feature type="disulfide bond" evidence="1">
    <location>
        <begin position="133"/>
        <end position="142"/>
    </location>
</feature>
<feature type="disulfide bond" evidence="1">
    <location>
        <begin position="300"/>
        <end position="412"/>
    </location>
</feature>
<feature type="disulfide bond" evidence="1">
    <location>
        <begin position="324"/>
        <end position="372"/>
    </location>
</feature>
<feature type="disulfide bond" evidence="1">
    <location>
        <begin position="548"/>
        <end position="566"/>
    </location>
</feature>
<feature type="disulfide bond" evidence="1">
    <location>
        <begin position="678"/>
        <end position="746"/>
    </location>
</feature>
<feature type="splice variant" id="VSP_053417" description="In isoform 2." evidence="7">
    <location>
        <begin position="153"/>
        <end position="183"/>
    </location>
</feature>
<feature type="sequence variant" id="VAR_011820" description="In dbSNP:rs1046955.">
    <original>A</original>
    <variation>G</variation>
    <location>
        <position position="474"/>
    </location>
</feature>
<feature type="sequence variant" id="VAR_008855" description="In dbSNP:rs1046956." evidence="5 6">
    <original>L</original>
    <variation>M</variation>
    <location>
        <position position="503"/>
    </location>
</feature>
<feature type="sequence conflict" description="In Ref. 2; AAB18276." evidence="8" ref="2">
    <location>
        <position position="270"/>
    </location>
</feature>
<feature type="sequence conflict" description="In Ref. 2; AAB18276." evidence="8" ref="2">
    <original>A</original>
    <variation>S</variation>
    <location>
        <position position="473"/>
    </location>
</feature>
<keyword id="KW-0025">Alternative splicing</keyword>
<keyword id="KW-1015">Disulfide bond</keyword>
<keyword id="KW-0325">Glycoprotein</keyword>
<keyword id="KW-0393">Immunoglobulin domain</keyword>
<keyword id="KW-1267">Proteomics identification</keyword>
<keyword id="KW-1185">Reference proteome</keyword>
<keyword id="KW-0964">Secreted</keyword>
<keyword id="KW-0732">Signal</keyword>
<proteinExistence type="evidence at protein level"/>
<sequence length="785" mass="88381">MLVAGLLLWASLLTGAWPSFPTQDHLPATPRVRLSFKELKATGTAHFFNFLLNTTDYRILLKDEDHDRMYVGSKDYVLSLDLHDINREPLIIHWAASPQRIEECVLSGKDVNGECGNFVRLIQPWNRTHLYVCGTGAYNPMCTYVNRGRRAQATPWTQTQAVRGRGSRATDGALRPMPTAPRQDYIFYLEPERLESGKGKCPYDPKLDTASALINEELYAGVYIDFMGTDAAIFRTLGKQTAMRTDQYNSRWLNDPSFIHAELIPDSAERNDDKLYFFFRERSAEAPQSPAVYARIGRICLNDDGGHCCLVNKWSTFLKARLVCSVPGEDGIETHFDELQDVFVQQTQDVRNPVIYAVFTSSGSVFRGSAVCVYSMADIRMVFNGPFAHKEGPNYQWMPFSGKMPYPRPGTCPGGTFTPSMKSTKDYPDEVINFMRSHPLMYQAVYPLQRRPLVVRTGAPYRLTTIAVDQVDAADGRYEVLFLGTDRGTVQKVIVLPKDDQELEELMLEEVEVFKDPAPVKTMTISSKRQQLYVASAVGVTHLSLHRCQAYGAACADCCLARDPYCAWDGQACSRYTASSKRRSRRQDVRHGNPIRQCRGFNSNANKNAVESVQYGVAGSAAFLECQPRSPQATVKWLFQRDPGDRRREIRAEDRFLRTEQGLLLRALQLSDRGLYSCTATENNFKHVVTRVQLHVLGRDAVHAALFPPLSMSAPPPPGAGPPTPPYQELAQLLAQPEVGLIHQYCQGYWRHVPPSPREAPGAPRSPEPQDQKKPRNRRHHPPDT</sequence>
<comment type="function">
    <text>May play a role in cell motility and cell adhesion.</text>
</comment>
<comment type="subcellular location">
    <subcellularLocation>
        <location evidence="1">Secreted</location>
    </subcellularLocation>
</comment>
<comment type="alternative products">
    <event type="alternative splicing"/>
    <isoform>
        <id>Q13275-1</id>
        <name>1</name>
        <sequence type="displayed"/>
    </isoform>
    <isoform>
        <id>Q13275-2</id>
        <name>2</name>
        <sequence type="described" ref="VSP_053417"/>
    </isoform>
</comment>
<comment type="tissue specificity">
    <text>Expressed abundantly but differentially in a variety of neural and nonneural tissues. There is high expression in mammary gland, kidney, fetal brain, and lung and lower expression in heart and liver.</text>
</comment>
<comment type="developmental stage">
    <text>Detected as early as embryonic day 10.</text>
</comment>
<comment type="similarity">
    <text evidence="8">Belongs to the semaphorin family.</text>
</comment>
<comment type="online information" name="Atlas of Genetics and Cytogenetics in Oncology and Haematology">
    <link uri="https://atlasgeneticsoncology.org/gene/42254/SEMA3F"/>
</comment>